<evidence type="ECO:0000250" key="1"/>
<evidence type="ECO:0000255" key="2"/>
<evidence type="ECO:0000255" key="3">
    <source>
        <dbReference type="PROSITE-ProRule" id="PRU00539"/>
    </source>
</evidence>
<evidence type="ECO:0000256" key="4">
    <source>
        <dbReference type="SAM" id="MobiDB-lite"/>
    </source>
</evidence>
<protein>
    <recommendedName>
        <fullName>RNA-directed RNA polymerase</fullName>
        <shortName>RDRP</shortName>
        <ecNumber>2.7.7.48</ecNumber>
    </recommendedName>
    <alternativeName>
        <fullName>Protein VP1</fullName>
    </alternativeName>
</protein>
<proteinExistence type="inferred from homology"/>
<organism>
    <name type="scientific">Blotched snakehead virus</name>
    <name type="common">BSNV</name>
    <name type="synonym">Channa lucius virus</name>
    <dbReference type="NCBI Taxonomy" id="311176"/>
    <lineage>
        <taxon>Viruses</taxon>
        <taxon>Riboviria</taxon>
        <taxon>Orthornavirae</taxon>
        <taxon>Birnaviridae</taxon>
        <taxon>Blosnavirus</taxon>
        <taxon>Blosnavirus channae</taxon>
    </lineage>
</organism>
<organismHost>
    <name type="scientific">Channa lucius</name>
    <name type="common">Forest snakehead</name>
    <name type="synonym">Ophicephalus lucius</name>
    <dbReference type="NCBI Taxonomy" id="64146"/>
</organismHost>
<comment type="function">
    <text evidence="1">RNA-dependent RNA polymerase which is found both free and covalently attached to the genomic RNA. May also contain guanylyl and methyl transferase activities (By similarity).</text>
</comment>
<comment type="catalytic activity">
    <reaction evidence="3">
        <text>RNA(n) + a ribonucleoside 5'-triphosphate = RNA(n+1) + diphosphate</text>
        <dbReference type="Rhea" id="RHEA:21248"/>
        <dbReference type="Rhea" id="RHEA-COMP:14527"/>
        <dbReference type="Rhea" id="RHEA-COMP:17342"/>
        <dbReference type="ChEBI" id="CHEBI:33019"/>
        <dbReference type="ChEBI" id="CHEBI:61557"/>
        <dbReference type="ChEBI" id="CHEBI:140395"/>
        <dbReference type="EC" id="2.7.7.48"/>
    </reaction>
</comment>
<comment type="subunit">
    <text evidence="1">Interacts with VP3 in the cytoplasm.</text>
</comment>
<comment type="subcellular location">
    <subcellularLocation>
        <location evidence="1">Virion</location>
    </subcellularLocation>
    <text evidence="1">Minor amounts are incorporated in the virion.</text>
</comment>
<comment type="PTM">
    <text evidence="1">May exist in multiple phosphorylated forms.</text>
</comment>
<dbReference type="EC" id="2.7.7.48"/>
<dbReference type="EMBL" id="AJ459383">
    <property type="protein sequence ID" value="CAD30691.1"/>
    <property type="molecule type" value="Genomic_RNA"/>
</dbReference>
<dbReference type="RefSeq" id="YP_052864.1">
    <property type="nucleotide sequence ID" value="NC_005983.1"/>
</dbReference>
<dbReference type="SMR" id="Q8AZL8"/>
<dbReference type="GeneID" id="2886016"/>
<dbReference type="KEGG" id="vg:2886016"/>
<dbReference type="OrthoDB" id="249at10239"/>
<dbReference type="Proteomes" id="UP000007250">
    <property type="component" value="Genome"/>
</dbReference>
<dbReference type="GO" id="GO:0044423">
    <property type="term" value="C:virion component"/>
    <property type="evidence" value="ECO:0007669"/>
    <property type="project" value="UniProtKB-KW"/>
</dbReference>
<dbReference type="GO" id="GO:0005525">
    <property type="term" value="F:GTP binding"/>
    <property type="evidence" value="ECO:0007669"/>
    <property type="project" value="UniProtKB-KW"/>
</dbReference>
<dbReference type="GO" id="GO:0003968">
    <property type="term" value="F:RNA-directed RNA polymerase activity"/>
    <property type="evidence" value="ECO:0007669"/>
    <property type="project" value="UniProtKB-KW"/>
</dbReference>
<dbReference type="GO" id="GO:0019079">
    <property type="term" value="P:viral genome replication"/>
    <property type="evidence" value="ECO:0007669"/>
    <property type="project" value="InterPro"/>
</dbReference>
<dbReference type="Gene3D" id="6.10.140.300">
    <property type="match status" value="1"/>
</dbReference>
<dbReference type="Gene3D" id="3.90.1730.10">
    <property type="entry name" value="Infectious bursal virus vp1 polymerase domain"/>
    <property type="match status" value="3"/>
</dbReference>
<dbReference type="InterPro" id="IPR046750">
    <property type="entry name" value="Birnavirus_RdRp_C"/>
</dbReference>
<dbReference type="InterPro" id="IPR007100">
    <property type="entry name" value="Birnavirus_RdRp_palm"/>
</dbReference>
<dbReference type="InterPro" id="IPR046812">
    <property type="entry name" value="Birnavirus_RdRp_palm_sf"/>
</dbReference>
<dbReference type="InterPro" id="IPR046752">
    <property type="entry name" value="Birnavirus_RdRp_thumb"/>
</dbReference>
<dbReference type="InterPro" id="IPR046813">
    <property type="entry name" value="Birnavirus_RdRp_thumb_sf"/>
</dbReference>
<dbReference type="InterPro" id="IPR043502">
    <property type="entry name" value="DNA/RNA_pol_sf"/>
</dbReference>
<dbReference type="Pfam" id="PF20489">
    <property type="entry name" value="Birna_RdRp_C"/>
    <property type="match status" value="1"/>
</dbReference>
<dbReference type="Pfam" id="PF04197">
    <property type="entry name" value="Birna_RdRp_palm"/>
    <property type="match status" value="1"/>
</dbReference>
<dbReference type="Pfam" id="PF20488">
    <property type="entry name" value="Birna_VP1_thumb"/>
    <property type="match status" value="1"/>
</dbReference>
<dbReference type="SUPFAM" id="SSF56672">
    <property type="entry name" value="DNA/RNA polymerases"/>
    <property type="match status" value="1"/>
</dbReference>
<dbReference type="PROSITE" id="PS50524">
    <property type="entry name" value="RDRP_DSRNA_BIR"/>
    <property type="match status" value="1"/>
</dbReference>
<reference key="1">
    <citation type="journal article" date="2003" name="J. Virol.">
        <title>Blotched snakehead virus is a new aquatic birnavirus that is slightly more related to avibirnavirus than to aquabirnavirus.</title>
        <authorList>
            <person name="Da Costa B."/>
            <person name="Soignier S."/>
            <person name="Chevalier C."/>
            <person name="Henry C."/>
            <person name="Thory C."/>
            <person name="Huet J.-C."/>
            <person name="Delmas B."/>
        </authorList>
    </citation>
    <scope>NUCLEOTIDE SEQUENCE [GENOMIC RNA]</scope>
</reference>
<feature type="chain" id="PRO_0000227879" description="RNA-directed RNA polymerase">
    <location>
        <begin position="1"/>
        <end position="867"/>
    </location>
</feature>
<feature type="domain" description="RdRp catalytic" evidence="3">
    <location>
        <begin position="387"/>
        <end position="591"/>
    </location>
</feature>
<feature type="region of interest" description="Disordered" evidence="4">
    <location>
        <begin position="845"/>
        <end position="867"/>
    </location>
</feature>
<feature type="compositionally biased region" description="Basic residues" evidence="4">
    <location>
        <begin position="851"/>
        <end position="867"/>
    </location>
</feature>
<feature type="binding site" evidence="2">
    <location>
        <begin position="249"/>
        <end position="256"/>
    </location>
    <ligand>
        <name>GTP</name>
        <dbReference type="ChEBI" id="CHEBI:37565"/>
    </ligand>
</feature>
<name>RDRP_BSNV</name>
<keyword id="KW-0191">Covalent protein-RNA linkage</keyword>
<keyword id="KW-0342">GTP-binding</keyword>
<keyword id="KW-0547">Nucleotide-binding</keyword>
<keyword id="KW-0548">Nucleotidyltransferase</keyword>
<keyword id="KW-0597">Phosphoprotein</keyword>
<keyword id="KW-1185">Reference proteome</keyword>
<keyword id="KW-0696">RNA-directed RNA polymerase</keyword>
<keyword id="KW-0808">Transferase</keyword>
<keyword id="KW-0693">Viral RNA replication</keyword>
<keyword id="KW-0946">Virion</keyword>
<sequence>MSDVFNTPHARRTITQALGLTNVSDRTQDWLLPEPWNPPMDPIKNSQEAAEYLQRNQYRMLKPRAIPENTPLDTSELFPHLAEFVGSGAFGTSTLVPAGSTEYIPRYYPTHKPEHNKPTPFGHYDVALLKQMTYQLTNGKDNPEEEGTTFRQFRDTIVEQQYGSGTSQGQLARLVAMKEVATGRNPNKSPKELGLSMEEIATMLEQTLPIGQPGGDEGWPSLTTTLSELLNPAEGMDYLPHITMKSSSGLPFIGKTKGETVTSALAICDTFLREVSECVKEGAMASDNQKLQKLLQDYWYLSCGLLFPKAERYEKKAWLTKTRNIWSAPFPTHLLLSTISWPIMNSSKNNILNVPECVSLYGFNPFSGGMDAVVTNILAQPDETLFLIYADNIYIYMDRTWFSIDLEKGEANATPEHAQAVSYYLLTRGWTQDDGSPAFNATWATIAMMIAPSLVVDSSCLFMNLQLKTYGQGSGNAWTFLINHTLSTILVGKWIEAGQPNPRSKEFMDLEAATGINFKIEREIEGLPTRLQEAMDKAVHTGFLGDGTTNPPEKEGPTVDLDLLGWSATYSRHMDMWVPVLDKERLLSSAAYPKGLENKDLKGKPGAEIAYKIVRNEALLMVGGWNYPLIARSLMANTSAARNNLRQKGVPLDTLTRDWEKMTEFSDIFEDLPIDTKLEVTSEFLQRLNLRGERKQPNVNKHHLRTKGLKKCVSALKQGACRNPTTVAGLKLTAYSKSRINKAKAVFDEINNLPKTESDDWSDRMDDADRLMKANNLYMREARSALEDVHNSLLALSGETVKAKTPQEKSTEKVSNPVVGYRLPAERATGVQHALLGVGVSRPSEGALTKNARKMKKRREKARGINH</sequence>
<gene>
    <name type="primary">VP1</name>
</gene>
<accession>Q8AZL8</accession>